<evidence type="ECO:0000250" key="1"/>
<evidence type="ECO:0000250" key="2">
    <source>
        <dbReference type="UniProtKB" id="Q9Z1P8"/>
    </source>
</evidence>
<evidence type="ECO:0000255" key="3"/>
<evidence type="ECO:0000255" key="4">
    <source>
        <dbReference type="PROSITE-ProRule" id="PRU00739"/>
    </source>
</evidence>
<evidence type="ECO:0000269" key="5">
    <source>
    </source>
</evidence>
<evidence type="ECO:0000269" key="6">
    <source>
    </source>
</evidence>
<evidence type="ECO:0000269" key="7">
    <source>
    </source>
</evidence>
<evidence type="ECO:0000269" key="8">
    <source>
    </source>
</evidence>
<evidence type="ECO:0000269" key="9">
    <source>
    </source>
</evidence>
<evidence type="ECO:0000269" key="10">
    <source>
    </source>
</evidence>
<evidence type="ECO:0000269" key="11">
    <source>
    </source>
</evidence>
<evidence type="ECO:0000269" key="12">
    <source>
    </source>
</evidence>
<evidence type="ECO:0000269" key="13">
    <source>
    </source>
</evidence>
<evidence type="ECO:0000269" key="14">
    <source>
    </source>
</evidence>
<evidence type="ECO:0000269" key="15">
    <source>
    </source>
</evidence>
<evidence type="ECO:0000269" key="16">
    <source>
    </source>
</evidence>
<evidence type="ECO:0000269" key="17">
    <source ref="8"/>
</evidence>
<evidence type="ECO:0000303" key="18">
    <source>
    </source>
</evidence>
<evidence type="ECO:0000303" key="19">
    <source>
    </source>
</evidence>
<evidence type="ECO:0000303" key="20">
    <source>
    </source>
</evidence>
<evidence type="ECO:0000303" key="21">
    <source>
    </source>
</evidence>
<evidence type="ECO:0000305" key="22"/>
<evidence type="ECO:0000305" key="23">
    <source>
    </source>
</evidence>
<evidence type="ECO:0000305" key="24">
    <source>
    </source>
</evidence>
<evidence type="ECO:0007744" key="25">
    <source>
        <dbReference type="PDB" id="6EUB"/>
    </source>
</evidence>
<evidence type="ECO:0007829" key="26">
    <source>
        <dbReference type="PDB" id="6U1U"/>
    </source>
</evidence>
<reference key="1">
    <citation type="journal article" date="2000" name="Biochem. J.">
        <title>Hepatic expression, synthesis and secretion of a novel fibrinogen/angiopoietin-related protein that prevents endothelial-cell apoptosis.</title>
        <authorList>
            <person name="Kim I."/>
            <person name="Kim H.-G."/>
            <person name="Kim H."/>
            <person name="Kim H.-H."/>
            <person name="Park S.K."/>
            <person name="Uhm C.-S."/>
            <person name="Lee Z.H."/>
            <person name="Koh G.Y."/>
        </authorList>
    </citation>
    <scope>NUCLEOTIDE SEQUENCE [MRNA] (ISOFORM 1)</scope>
    <scope>TISSUE SPECIFICITY</scope>
    <scope>SUBCELLULAR LOCATION</scope>
    <scope>GLYCOSYLATION</scope>
    <scope>VARIANT MET-266</scope>
</reference>
<reference key="2">
    <citation type="journal article" date="2000" name="Mol. Cell. Biol.">
        <title>Peroxisome proliferator-activated receptor gamma target gene encoding a novel angiopoietin-related protein associated with adipose differentiation.</title>
        <authorList>
            <person name="Yoon J.C."/>
            <person name="Chickering T.W."/>
            <person name="Rosen E.D."/>
            <person name="Dussault B."/>
            <person name="Qin Y."/>
            <person name="Soukas A."/>
            <person name="Friedman J.M."/>
            <person name="Holmes W.E."/>
            <person name="Spiegelman B.M."/>
        </authorList>
    </citation>
    <scope>NUCLEOTIDE SEQUENCE [MRNA] (ISOFORM 1)</scope>
    <scope>TISSUE SPECIFICITY</scope>
    <source>
        <tissue>Aortic endothelium</tissue>
    </source>
</reference>
<reference key="3">
    <citation type="journal article" date="2002" name="Zhonghua Yi Xue Za Zhi">
        <title>Cloning of a novel gene, ANGPTL4 and the functional study in angiogenesis.</title>
        <authorList>
            <person name="Zhu H."/>
            <person name="Li J."/>
            <person name="Qin W."/>
            <person name="Yang Y."/>
            <person name="He X."/>
            <person name="Wan D."/>
            <person name="Gu J."/>
        </authorList>
    </citation>
    <scope>NUCLEOTIDE SEQUENCE [MRNA] (ISOFORM 1)</scope>
    <source>
        <tissue>Placenta</tissue>
    </source>
</reference>
<reference key="4">
    <citation type="journal article" date="2003" name="Cancer Res.">
        <title>Inhibition of angiogenesis and vascular leakiness by angiopoietin-related protein 4.</title>
        <authorList>
            <person name="Ito Y."/>
            <person name="Oike Y."/>
            <person name="Yasunaga K."/>
            <person name="Hamada K."/>
            <person name="Miyata K."/>
            <person name="Matsumoto S."/>
            <person name="Sugano S."/>
            <person name="Tanihara H."/>
            <person name="Masuho Y."/>
            <person name="Suda T."/>
        </authorList>
    </citation>
    <scope>NUCLEOTIDE SEQUENCE [MRNA] (ISOFORM 1)</scope>
    <scope>FUNCTION</scope>
    <scope>SUBCELLULAR LOCATION</scope>
    <source>
        <tissue>Placenta</tissue>
    </source>
</reference>
<reference key="5">
    <citation type="submission" date="1999-05" db="EMBL/GenBank/DDBJ databases">
        <title>A catalogue of genes in the human dermal papilla cells as identified by expressed sequence tags.</title>
        <authorList>
            <person name="Kim M.K."/>
            <person name="Kim Y.H."/>
            <person name="Seo J.M."/>
            <person name="Lee H.M."/>
            <person name="Chung H.J."/>
            <person name="Sohn M.Y."/>
            <person name="Hwang S.Y."/>
            <person name="Im S.U."/>
            <person name="Jung E.J."/>
            <person name="Lee J.H."/>
            <person name="Kim J.C."/>
        </authorList>
    </citation>
    <scope>NUCLEOTIDE SEQUENCE [LARGE SCALE MRNA] (ISOFORM 1)</scope>
    <source>
        <tissue>Hair follicle dermal papilla</tissue>
    </source>
</reference>
<reference key="6">
    <citation type="journal article" date="2003" name="Genome Res.">
        <title>The secreted protein discovery initiative (SPDI), a large-scale effort to identify novel human secreted and transmembrane proteins: a bioinformatics assessment.</title>
        <authorList>
            <person name="Clark H.F."/>
            <person name="Gurney A.L."/>
            <person name="Abaya E."/>
            <person name="Baker K."/>
            <person name="Baldwin D.T."/>
            <person name="Brush J."/>
            <person name="Chen J."/>
            <person name="Chow B."/>
            <person name="Chui C."/>
            <person name="Crowley C."/>
            <person name="Currell B."/>
            <person name="Deuel B."/>
            <person name="Dowd P."/>
            <person name="Eaton D."/>
            <person name="Foster J.S."/>
            <person name="Grimaldi C."/>
            <person name="Gu Q."/>
            <person name="Hass P.E."/>
            <person name="Heldens S."/>
            <person name="Huang A."/>
            <person name="Kim H.S."/>
            <person name="Klimowski L."/>
            <person name="Jin Y."/>
            <person name="Johnson S."/>
            <person name="Lee J."/>
            <person name="Lewis L."/>
            <person name="Liao D."/>
            <person name="Mark M.R."/>
            <person name="Robbie E."/>
            <person name="Sanchez C."/>
            <person name="Schoenfeld J."/>
            <person name="Seshagiri S."/>
            <person name="Simmons L."/>
            <person name="Singh J."/>
            <person name="Smith V."/>
            <person name="Stinson J."/>
            <person name="Vagts A."/>
            <person name="Vandlen R.L."/>
            <person name="Watanabe C."/>
            <person name="Wieand D."/>
            <person name="Woods K."/>
            <person name="Xie M.-H."/>
            <person name="Yansura D.G."/>
            <person name="Yi S."/>
            <person name="Yu G."/>
            <person name="Yuan J."/>
            <person name="Zhang M."/>
            <person name="Zhang Z."/>
            <person name="Goddard A.D."/>
            <person name="Wood W.I."/>
            <person name="Godowski P.J."/>
            <person name="Gray A.M."/>
        </authorList>
    </citation>
    <scope>NUCLEOTIDE SEQUENCE [LARGE SCALE MRNA] (ISOFORM 1)</scope>
</reference>
<reference key="7">
    <citation type="journal article" date="2004" name="Nat. Genet.">
        <title>Complete sequencing and characterization of 21,243 full-length human cDNAs.</title>
        <authorList>
            <person name="Ota T."/>
            <person name="Suzuki Y."/>
            <person name="Nishikawa T."/>
            <person name="Otsuki T."/>
            <person name="Sugiyama T."/>
            <person name="Irie R."/>
            <person name="Wakamatsu A."/>
            <person name="Hayashi K."/>
            <person name="Sato H."/>
            <person name="Nagai K."/>
            <person name="Kimura K."/>
            <person name="Makita H."/>
            <person name="Sekine M."/>
            <person name="Obayashi M."/>
            <person name="Nishi T."/>
            <person name="Shibahara T."/>
            <person name="Tanaka T."/>
            <person name="Ishii S."/>
            <person name="Yamamoto J."/>
            <person name="Saito K."/>
            <person name="Kawai Y."/>
            <person name="Isono Y."/>
            <person name="Nakamura Y."/>
            <person name="Nagahari K."/>
            <person name="Murakami K."/>
            <person name="Yasuda T."/>
            <person name="Iwayanagi T."/>
            <person name="Wagatsuma M."/>
            <person name="Shiratori A."/>
            <person name="Sudo H."/>
            <person name="Hosoiri T."/>
            <person name="Kaku Y."/>
            <person name="Kodaira H."/>
            <person name="Kondo H."/>
            <person name="Sugawara M."/>
            <person name="Takahashi M."/>
            <person name="Kanda K."/>
            <person name="Yokoi T."/>
            <person name="Furuya T."/>
            <person name="Kikkawa E."/>
            <person name="Omura Y."/>
            <person name="Abe K."/>
            <person name="Kamihara K."/>
            <person name="Katsuta N."/>
            <person name="Sato K."/>
            <person name="Tanikawa M."/>
            <person name="Yamazaki M."/>
            <person name="Ninomiya K."/>
            <person name="Ishibashi T."/>
            <person name="Yamashita H."/>
            <person name="Murakawa K."/>
            <person name="Fujimori K."/>
            <person name="Tanai H."/>
            <person name="Kimata M."/>
            <person name="Watanabe M."/>
            <person name="Hiraoka S."/>
            <person name="Chiba Y."/>
            <person name="Ishida S."/>
            <person name="Ono Y."/>
            <person name="Takiguchi S."/>
            <person name="Watanabe S."/>
            <person name="Yosida M."/>
            <person name="Hotuta T."/>
            <person name="Kusano J."/>
            <person name="Kanehori K."/>
            <person name="Takahashi-Fujii A."/>
            <person name="Hara H."/>
            <person name="Tanase T.-O."/>
            <person name="Nomura Y."/>
            <person name="Togiya S."/>
            <person name="Komai F."/>
            <person name="Hara R."/>
            <person name="Takeuchi K."/>
            <person name="Arita M."/>
            <person name="Imose N."/>
            <person name="Musashino K."/>
            <person name="Yuuki H."/>
            <person name="Oshima A."/>
            <person name="Sasaki N."/>
            <person name="Aotsuka S."/>
            <person name="Yoshikawa Y."/>
            <person name="Matsunawa H."/>
            <person name="Ichihara T."/>
            <person name="Shiohata N."/>
            <person name="Sano S."/>
            <person name="Moriya S."/>
            <person name="Momiyama H."/>
            <person name="Satoh N."/>
            <person name="Takami S."/>
            <person name="Terashima Y."/>
            <person name="Suzuki O."/>
            <person name="Nakagawa S."/>
            <person name="Senoh A."/>
            <person name="Mizoguchi H."/>
            <person name="Goto Y."/>
            <person name="Shimizu F."/>
            <person name="Wakebe H."/>
            <person name="Hishigaki H."/>
            <person name="Watanabe T."/>
            <person name="Sugiyama A."/>
            <person name="Takemoto M."/>
            <person name="Kawakami B."/>
            <person name="Yamazaki M."/>
            <person name="Watanabe K."/>
            <person name="Kumagai A."/>
            <person name="Itakura S."/>
            <person name="Fukuzumi Y."/>
            <person name="Fujimori Y."/>
            <person name="Komiyama M."/>
            <person name="Tashiro H."/>
            <person name="Tanigami A."/>
            <person name="Fujiwara T."/>
            <person name="Ono T."/>
            <person name="Yamada K."/>
            <person name="Fujii Y."/>
            <person name="Ozaki K."/>
            <person name="Hirao M."/>
            <person name="Ohmori Y."/>
            <person name="Kawabata A."/>
            <person name="Hikiji T."/>
            <person name="Kobatake N."/>
            <person name="Inagaki H."/>
            <person name="Ikema Y."/>
            <person name="Okamoto S."/>
            <person name="Okitani R."/>
            <person name="Kawakami T."/>
            <person name="Noguchi S."/>
            <person name="Itoh T."/>
            <person name="Shigeta K."/>
            <person name="Senba T."/>
            <person name="Matsumura K."/>
            <person name="Nakajima Y."/>
            <person name="Mizuno T."/>
            <person name="Morinaga M."/>
            <person name="Sasaki M."/>
            <person name="Togashi T."/>
            <person name="Oyama M."/>
            <person name="Hata H."/>
            <person name="Watanabe M."/>
            <person name="Komatsu T."/>
            <person name="Mizushima-Sugano J."/>
            <person name="Satoh T."/>
            <person name="Shirai Y."/>
            <person name="Takahashi Y."/>
            <person name="Nakagawa K."/>
            <person name="Okumura K."/>
            <person name="Nagase T."/>
            <person name="Nomura N."/>
            <person name="Kikuchi H."/>
            <person name="Masuho Y."/>
            <person name="Yamashita R."/>
            <person name="Nakai K."/>
            <person name="Yada T."/>
            <person name="Nakamura Y."/>
            <person name="Ohara O."/>
            <person name="Isogai T."/>
            <person name="Sugano S."/>
        </authorList>
    </citation>
    <scope>NUCLEOTIDE SEQUENCE [LARGE SCALE MRNA] (ISOFORM 3)</scope>
    <source>
        <tissue>Thymus</tissue>
    </source>
</reference>
<reference key="8">
    <citation type="submission" date="2005-04" db="EMBL/GenBank/DDBJ databases">
        <authorList>
            <person name="Suzuki Y."/>
            <person name="Sugano S."/>
            <person name="Totoki Y."/>
            <person name="Toyoda A."/>
            <person name="Takeda T."/>
            <person name="Sakaki Y."/>
            <person name="Tanaka A."/>
            <person name="Yokoyama S."/>
        </authorList>
    </citation>
    <scope>NUCLEOTIDE SEQUENCE [LARGE SCALE MRNA] (ISOFORM 1)</scope>
    <scope>VARIANT MET-266</scope>
    <source>
        <tissue>Adipose tissue</tissue>
    </source>
</reference>
<reference key="9">
    <citation type="journal article" date="2004" name="Nature">
        <title>The DNA sequence and biology of human chromosome 19.</title>
        <authorList>
            <person name="Grimwood J."/>
            <person name="Gordon L.A."/>
            <person name="Olsen A.S."/>
            <person name="Terry A."/>
            <person name="Schmutz J."/>
            <person name="Lamerdin J.E."/>
            <person name="Hellsten U."/>
            <person name="Goodstein D."/>
            <person name="Couronne O."/>
            <person name="Tran-Gyamfi M."/>
            <person name="Aerts A."/>
            <person name="Altherr M."/>
            <person name="Ashworth L."/>
            <person name="Bajorek E."/>
            <person name="Black S."/>
            <person name="Branscomb E."/>
            <person name="Caenepeel S."/>
            <person name="Carrano A.V."/>
            <person name="Caoile C."/>
            <person name="Chan Y.M."/>
            <person name="Christensen M."/>
            <person name="Cleland C.A."/>
            <person name="Copeland A."/>
            <person name="Dalin E."/>
            <person name="Dehal P."/>
            <person name="Denys M."/>
            <person name="Detter J.C."/>
            <person name="Escobar J."/>
            <person name="Flowers D."/>
            <person name="Fotopulos D."/>
            <person name="Garcia C."/>
            <person name="Georgescu A.M."/>
            <person name="Glavina T."/>
            <person name="Gomez M."/>
            <person name="Gonzales E."/>
            <person name="Groza M."/>
            <person name="Hammon N."/>
            <person name="Hawkins T."/>
            <person name="Haydu L."/>
            <person name="Ho I."/>
            <person name="Huang W."/>
            <person name="Israni S."/>
            <person name="Jett J."/>
            <person name="Kadner K."/>
            <person name="Kimball H."/>
            <person name="Kobayashi A."/>
            <person name="Larionov V."/>
            <person name="Leem S.-H."/>
            <person name="Lopez F."/>
            <person name="Lou Y."/>
            <person name="Lowry S."/>
            <person name="Malfatti S."/>
            <person name="Martinez D."/>
            <person name="McCready P.M."/>
            <person name="Medina C."/>
            <person name="Morgan J."/>
            <person name="Nelson K."/>
            <person name="Nolan M."/>
            <person name="Ovcharenko I."/>
            <person name="Pitluck S."/>
            <person name="Pollard M."/>
            <person name="Popkie A.P."/>
            <person name="Predki P."/>
            <person name="Quan G."/>
            <person name="Ramirez L."/>
            <person name="Rash S."/>
            <person name="Retterer J."/>
            <person name="Rodriguez A."/>
            <person name="Rogers S."/>
            <person name="Salamov A."/>
            <person name="Salazar A."/>
            <person name="She X."/>
            <person name="Smith D."/>
            <person name="Slezak T."/>
            <person name="Solovyev V."/>
            <person name="Thayer N."/>
            <person name="Tice H."/>
            <person name="Tsai M."/>
            <person name="Ustaszewska A."/>
            <person name="Vo N."/>
            <person name="Wagner M."/>
            <person name="Wheeler J."/>
            <person name="Wu K."/>
            <person name="Xie G."/>
            <person name="Yang J."/>
            <person name="Dubchak I."/>
            <person name="Furey T.S."/>
            <person name="DeJong P."/>
            <person name="Dickson M."/>
            <person name="Gordon D."/>
            <person name="Eichler E.E."/>
            <person name="Pennacchio L.A."/>
            <person name="Richardson P."/>
            <person name="Stubbs L."/>
            <person name="Rokhsar D.S."/>
            <person name="Myers R.M."/>
            <person name="Rubin E.M."/>
            <person name="Lucas S.M."/>
        </authorList>
    </citation>
    <scope>NUCLEOTIDE SEQUENCE [LARGE SCALE GENOMIC DNA]</scope>
</reference>
<reference key="10">
    <citation type="submission" date="2005-09" db="EMBL/GenBank/DDBJ databases">
        <authorList>
            <person name="Mural R.J."/>
            <person name="Istrail S."/>
            <person name="Sutton G.G."/>
            <person name="Florea L."/>
            <person name="Halpern A.L."/>
            <person name="Mobarry C.M."/>
            <person name="Lippert R."/>
            <person name="Walenz B."/>
            <person name="Shatkay H."/>
            <person name="Dew I."/>
            <person name="Miller J.R."/>
            <person name="Flanigan M.J."/>
            <person name="Edwards N.J."/>
            <person name="Bolanos R."/>
            <person name="Fasulo D."/>
            <person name="Halldorsson B.V."/>
            <person name="Hannenhalli S."/>
            <person name="Turner R."/>
            <person name="Yooseph S."/>
            <person name="Lu F."/>
            <person name="Nusskern D.R."/>
            <person name="Shue B.C."/>
            <person name="Zheng X.H."/>
            <person name="Zhong F."/>
            <person name="Delcher A.L."/>
            <person name="Huson D.H."/>
            <person name="Kravitz S.A."/>
            <person name="Mouchard L."/>
            <person name="Reinert K."/>
            <person name="Remington K.A."/>
            <person name="Clark A.G."/>
            <person name="Waterman M.S."/>
            <person name="Eichler E.E."/>
            <person name="Adams M.D."/>
            <person name="Hunkapiller M.W."/>
            <person name="Myers E.W."/>
            <person name="Venter J.C."/>
        </authorList>
    </citation>
    <scope>NUCLEOTIDE SEQUENCE [LARGE SCALE GENOMIC DNA]</scope>
</reference>
<reference key="11">
    <citation type="journal article" date="2004" name="Genome Res.">
        <title>The status, quality, and expansion of the NIH full-length cDNA project: the Mammalian Gene Collection (MGC).</title>
        <authorList>
            <consortium name="The MGC Project Team"/>
        </authorList>
    </citation>
    <scope>NUCLEOTIDE SEQUENCE [LARGE SCALE MRNA] (ISOFORM 1)</scope>
    <source>
        <tissue>Pancreas</tissue>
    </source>
</reference>
<reference key="12">
    <citation type="journal article" date="2002" name="Zhonghua Zhong Liu Za Zhi">
        <title>Expression and function of hepatocellular carcinoma-related gene pp1158.</title>
        <authorList>
            <person name="Zhu H."/>
            <person name="Li J."/>
            <person name="Wan D."/>
            <person name="Yang Y."/>
            <person name="Qin W."/>
            <person name="Ge C."/>
            <person name="Yao M."/>
            <person name="Gu J."/>
        </authorList>
    </citation>
    <scope>TISSUE SPECIFICITY</scope>
</reference>
<reference key="13">
    <citation type="journal article" date="2006" name="Circ. Res.">
        <title>Extracellular matrix-bound angiopoietin-like 4 inhibits endothelial cell adhesion, migration, and sprouting and alters actin cytoskeleton.</title>
        <authorList>
            <person name="Cazes A."/>
            <person name="Galaup A."/>
            <person name="Chomel C."/>
            <person name="Bignon M."/>
            <person name="Brechot N."/>
            <person name="Le Jan S."/>
            <person name="Weber H."/>
            <person name="Corvol P."/>
            <person name="Muller L."/>
            <person name="Germain S."/>
            <person name="Monnot C."/>
        </authorList>
    </citation>
    <scope>FUNCTION</scope>
    <scope>INDUCTION BY ISCHEMIA</scope>
    <scope>SUBCELLULAR LOCATION</scope>
    <scope>PROTEOLYTIC CLEAVAGE</scope>
</reference>
<reference key="14">
    <citation type="journal article" date="2009" name="J. Biol. Chem.">
        <title>Genetic variation in ANGPTL4 provides insights into protein processing and function.</title>
        <authorList>
            <person name="Yin W."/>
            <person name="Romeo S."/>
            <person name="Chang S."/>
            <person name="Grishin N.V."/>
            <person name="Hobbs H.H."/>
            <person name="Cohen J.C."/>
        </authorList>
    </citation>
    <scope>SUBCELLULAR LOCATION</scope>
    <scope>SUBUNIT</scope>
    <scope>PROTEOLYTIC CLEAVAGE</scope>
    <scope>CHARACTERIZATION OF VARIANT LYS-40</scope>
    <scope>MUTAGENESIS OF GLU-40; CYS-76; CYS-80 AND 161-ARG--ARG-164</scope>
    <scope>DISULFIDE BONDS</scope>
</reference>
<reference key="15">
    <citation type="journal article" date="2011" name="J. Biol. Chem.">
        <title>Proteolytic processing of angiopoietin-like protein 4 by proprotein convertases modulates its inhibitory effects on lipoprotein lipase activity.</title>
        <authorList>
            <person name="Lei X."/>
            <person name="Shi F."/>
            <person name="Basu D."/>
            <person name="Huq A."/>
            <person name="Routhier S."/>
            <person name="Day R."/>
            <person name="Jin W."/>
        </authorList>
    </citation>
    <scope>SUBCELLULAR LOCATION</scope>
    <scope>PARTIAL PROTEIN SEQUENCE</scope>
    <scope>PROTEOLYTIC CLEAVAGE</scope>
    <scope>MUTAGENESIS OF ARG-161 AND ARG-164</scope>
</reference>
<reference key="16">
    <citation type="journal article" date="2016" name="Elife">
        <title>The angiopoietin-like protein ANGPTL4 catalyzes unfolding of the hydrolase domain in lipoprotein lipase and the endothelial membrane protein GPIHBP1 counteracts this unfolding.</title>
        <authorList>
            <person name="Mysling S."/>
            <person name="Kristensen K.K."/>
            <person name="Larsson M."/>
            <person name="Kovrov O."/>
            <person name="Bensadouen A."/>
            <person name="Joergensen T.J."/>
            <person name="Olivecrona G."/>
            <person name="Young S.G."/>
            <person name="Ploug M."/>
        </authorList>
    </citation>
    <scope>FUNCTION</scope>
    <scope>CHARACTERIZATION OF VARIANT LYS-40</scope>
</reference>
<reference key="17">
    <citation type="journal article" date="2018" name="Proc. Natl. Acad. Sci. U.S.A.">
        <title>A disordered acidic domain in GPIHBP1 harboring a sulfated tyrosine regulates lipoprotein lipase.</title>
        <authorList>
            <person name="Kristensen K.K."/>
            <person name="Midtgaard S.R."/>
            <person name="Mysling S."/>
            <person name="Kovrov O."/>
            <person name="Hansen L.B."/>
            <person name="Skar-Gislinge N."/>
            <person name="Beigneux A.P."/>
            <person name="Kragelund B.B."/>
            <person name="Olivecrona G."/>
            <person name="Young S.G."/>
            <person name="Joergensen T.J.D."/>
            <person name="Fong L.G."/>
            <person name="Ploug M."/>
        </authorList>
    </citation>
    <scope>FUNCTION</scope>
</reference>
<reference evidence="25" key="18">
    <citation type="journal article" date="2018" name="Sci. Rep.">
        <title>Structures of Angptl3 and Angptl4, modulators of triglyceride levels and coronary artery disease.</title>
        <authorList>
            <person name="Biterova E."/>
            <person name="Esmaeeli M."/>
            <person name="Alanen H.I."/>
            <person name="Saaranen M."/>
            <person name="Ruddock L.W."/>
        </authorList>
    </citation>
    <scope>X-RAY CRYSTALLOGRAPHY (2.30 ANGSTROMS) OF 184-406</scope>
    <scope>DISULFIDE BONDS</scope>
    <scope>CHARACTERIZATION OF VARIANTS CYS-336; CYS-349 AND SER-361</scope>
    <scope>MUTAGENESIS OF GLY-223</scope>
</reference>
<reference key="19">
    <citation type="journal article" date="2007" name="Nat. Genet.">
        <title>Population-based resequencing of ANGPTL4 uncovers variations that reduce triglycerides and increase HDL.</title>
        <authorList>
            <person name="Romeo S."/>
            <person name="Pennacchio L.A."/>
            <person name="Fu Y."/>
            <person name="Boerwinkle E."/>
            <person name="Tybjaerg-Hansen A."/>
            <person name="Hobbs H.H."/>
            <person name="Cohen J.C."/>
        </authorList>
    </citation>
    <scope>ASSOCIATION WITH TGQTL</scope>
    <scope>VARIANTS LEU-5; LYS-40; ILE-41; ARG-67; LEU-72; ARG-77; LYS-167; SER-174; GLN-190; LYS-196; CYS-230; ARG-233; VAL-237; THR-251; MET-266; GLN-278; MET-291; MET-293; VAL-296; SER-307; MET-308; CYS-336; GLU-338; CYS-349; SER-361; ARG-361; GLN-371 AND TRP-384</scope>
</reference>
<reference key="20">
    <citation type="journal article" date="2018" name="Nat. Commun.">
        <title>Genetic inactivation of ANGPTL4 improves glucose homeostasis and is associated with reduced risk of diabetes.</title>
        <authorList>
            <person name="Gusarova V."/>
            <person name="O'Dushlaine C."/>
            <person name="Teslovich T.M."/>
            <person name="Benotti P.N."/>
            <person name="Mirshahi T."/>
            <person name="Gottesman O."/>
            <person name="Van Hout C.V."/>
            <person name="Murray M.F."/>
            <person name="Mahajan A."/>
            <person name="Nielsen J.B."/>
            <person name="Fritsche L."/>
            <person name="Wulff A.B."/>
            <person name="Gudbjartsson D.F."/>
            <person name="Sjoegren M."/>
            <person name="Emdin C.A."/>
            <person name="Scott R.A."/>
            <person name="Lee W.J."/>
            <person name="Small A."/>
            <person name="Kwee L.C."/>
            <person name="Dwivedi O.P."/>
            <person name="Prasad R.B."/>
            <person name="Bruse S."/>
            <person name="Lopez A.E."/>
            <person name="Penn J."/>
            <person name="Marcketta A."/>
            <person name="Leader J.B."/>
            <person name="Still C.D."/>
            <person name="Kirchner H.L."/>
            <person name="Mirshahi U.L."/>
            <person name="Wardeh A.H."/>
            <person name="Hartle C.M."/>
            <person name="Habegger L."/>
            <person name="Fetterolf S.N."/>
            <person name="Tusie-Luna T."/>
            <person name="Morris A.P."/>
            <person name="Holm H."/>
            <person name="Steinthorsdottir V."/>
            <person name="Sulem P."/>
            <person name="Thorsteinsdottir U."/>
            <person name="Rotter J.I."/>
            <person name="Chuang L.M."/>
            <person name="Damrauer S."/>
            <person name="Birtwell D."/>
            <person name="Brummett C.M."/>
            <person name="Khera A.V."/>
            <person name="Natarajan P."/>
            <person name="Orho-Melander M."/>
            <person name="Flannick J."/>
            <person name="Lotta L.A."/>
            <person name="Willer C.J."/>
            <person name="Holmen O.L."/>
            <person name="Ritchie M.D."/>
            <person name="Ledbetter D.H."/>
            <person name="Murphy A.J."/>
            <person name="Borecki I.B."/>
            <person name="Reid J.G."/>
            <person name="Overton J.D."/>
            <person name="Hansson O."/>
            <person name="Groop L."/>
            <person name="Shah S.H."/>
            <person name="Kraus W.E."/>
            <person name="Rader D.J."/>
            <person name="Chen Y.I."/>
            <person name="Hveem K."/>
            <person name="Wareham N.J."/>
            <person name="Kathiresan S."/>
            <person name="Melander O."/>
            <person name="Stefansson K."/>
            <person name="Nordestgaard B.G."/>
            <person name="Tybjaerg-Hansen A."/>
            <person name="Abecasis G.R."/>
            <person name="Altshuler D."/>
            <person name="Florez J.C."/>
            <person name="Boehnke M."/>
            <person name="McCarthy M.I."/>
            <person name="Yancopoulos G.D."/>
            <person name="Carey D.J."/>
            <person name="Shuldiner A.R."/>
            <person name="Baras A."/>
            <person name="Dewey F.E."/>
            <person name="Gromada J."/>
        </authorList>
    </citation>
    <scope>VARIANT LYS-40</scope>
    <scope>SUBCELLULAR LOCATION</scope>
    <scope>TISSUE SPECIFICITY</scope>
</reference>
<name>ANGL4_HUMAN</name>
<sequence>MSGAPTAGAALMLCAATAVLLSAQGGPVQSKSPRFASWDEMNVLAHGLLQLGQGLREHAERTRSQLSALERRLSACGSACQGTEGSTDLPLAPESRVDPEVLHSLQTQLKAQNSRIQQLFHKVAQQQRHLEKQHLRIQHLQSQFGLLDHKHLDHEVAKPARRKRLPEMAQPVDPAHNVSRLHRLPRDCQELFQVGERQSGLFEIQPQGSPPFLVNCKMTSDGGWTVIQRRHDGSVDFNRPWEAYKAGFGDPHGEFWLGLEKVHSITGDRNSRLAVQLRDWDGNAELLQFSVHLGGEDTAYSLQLTAPVAGQLGATTVPPSGLSVPFSTWDQDHDLRRDKNCAKSLSGGWWFGTCSHSNLNGQYFRSIPQQRQKLKKGIFWKTWRGRYYPLQATTMLIQPMAAEAAS</sequence>
<feature type="signal peptide" evidence="3">
    <location>
        <begin position="1"/>
        <end position="25"/>
    </location>
</feature>
<feature type="chain" id="PRO_0000009124" description="Angiopoietin-related protein 4">
    <location>
        <begin position="26"/>
        <end position="406"/>
    </location>
</feature>
<feature type="chain" id="PRO_0000446859" description="ANGPTL4 N-terminal chain" evidence="22">
    <location>
        <begin position="26"/>
        <end position="163"/>
    </location>
</feature>
<feature type="chain" id="PRO_0000446860" description="ANGPTL4 C-terminal chain" evidence="22">
    <location>
        <begin position="164"/>
        <end position="406"/>
    </location>
</feature>
<feature type="domain" description="Fibrinogen C-terminal" evidence="4">
    <location>
        <begin position="179"/>
        <end position="401"/>
    </location>
</feature>
<feature type="coiled-coil region" evidence="3">
    <location>
        <begin position="100"/>
        <end position="143"/>
    </location>
</feature>
<feature type="site" description="Cleavage" evidence="12">
    <location>
        <begin position="164"/>
        <end position="165"/>
    </location>
</feature>
<feature type="glycosylation site" description="N-linked (GlcNAc...) asparagine" evidence="3">
    <location>
        <position position="177"/>
    </location>
</feature>
<feature type="disulfide bond" evidence="4 14 25">
    <location>
        <begin position="188"/>
        <end position="216"/>
    </location>
</feature>
<feature type="disulfide bond" evidence="4 14 25">
    <location>
        <begin position="341"/>
        <end position="354"/>
    </location>
</feature>
<feature type="splice variant" id="VSP_055092" description="In isoform 3." evidence="21">
    <location>
        <begin position="1"/>
        <end position="167"/>
    </location>
</feature>
<feature type="splice variant" id="VSP_047045" description="In isoform 2." evidence="22">
    <original>RLPRDCQELFQVGERQSGLFEIQPQGSPPFLVNCKMTSD</original>
    <variation>H</variation>
    <location>
        <begin position="183"/>
        <end position="221"/>
    </location>
</feature>
<feature type="sequence variant" id="VAR_032642" description="In dbSNP:rs761583091." evidence="10">
    <original>P</original>
    <variation>L</variation>
    <location>
        <position position="5"/>
    </location>
</feature>
<feature type="sequence variant" id="VAR_032643" description="Associated with lower plasma levels of triglyceride and higher levels of HDL cholesterol; strongly reduced inactivation of lipoprotein lipase LPL; no effect on protein secretion and stability of monomers; abolishes accumulation of oligomers; dbSNP:rs116843064." evidence="10 11 13 16">
    <original>E</original>
    <variation>K</variation>
    <location>
        <position position="40"/>
    </location>
</feature>
<feature type="sequence variant" id="VAR_032644" description="In dbSNP:rs186754194." evidence="10">
    <original>M</original>
    <variation>I</variation>
    <location>
        <position position="41"/>
    </location>
</feature>
<feature type="sequence variant" id="VAR_032645" description="In dbSNP:rs538554190." evidence="10">
    <original>S</original>
    <variation>R</variation>
    <location>
        <position position="67"/>
    </location>
</feature>
<feature type="sequence variant" id="VAR_032646" description="In dbSNP:rs141831018." evidence="10">
    <original>R</original>
    <variation>L</variation>
    <location>
        <position position="72"/>
    </location>
</feature>
<feature type="sequence variant" id="VAR_032647" description="In dbSNP:rs568624939." evidence="10">
    <original>G</original>
    <variation>R</variation>
    <location>
        <position position="77"/>
    </location>
</feature>
<feature type="sequence variant" id="VAR_032648" description="In dbSNP:rs140640857." evidence="10">
    <original>E</original>
    <variation>K</variation>
    <location>
        <position position="167"/>
    </location>
</feature>
<feature type="sequence variant" id="VAR_032649" description="In dbSNP:rs1008363865." evidence="10">
    <original>P</original>
    <variation>S</variation>
    <location>
        <position position="174"/>
    </location>
</feature>
<feature type="sequence variant" id="VAR_032650" description="In dbSNP:rs77938377." evidence="10">
    <original>E</original>
    <variation>Q</variation>
    <location>
        <position position="190"/>
    </location>
</feature>
<feature type="sequence variant" id="VAR_032651" description="In dbSNP:rs1192364228." evidence="10">
    <original>E</original>
    <variation>K</variation>
    <location>
        <position position="196"/>
    </location>
</feature>
<feature type="sequence variant" id="VAR_032652" description="In dbSNP:rs201026877." evidence="10">
    <original>R</original>
    <variation>C</variation>
    <location>
        <position position="230"/>
    </location>
</feature>
<feature type="sequence variant" id="VAR_032653" evidence="10">
    <original>G</original>
    <variation>R</variation>
    <location>
        <position position="233"/>
    </location>
</feature>
<feature type="sequence variant" id="VAR_032654" description="In dbSNP:rs768374046." evidence="10">
    <original>F</original>
    <variation>V</variation>
    <location>
        <position position="237"/>
    </location>
</feature>
<feature type="sequence variant" id="VAR_032655" description="In dbSNP:rs376328756." evidence="10">
    <original>P</original>
    <variation>T</variation>
    <location>
        <position position="251"/>
    </location>
</feature>
<feature type="sequence variant" id="VAR_020428" description="In dbSNP:rs1044250." evidence="5 10 17">
    <original>T</original>
    <variation>M</variation>
    <location>
        <position position="266"/>
    </location>
</feature>
<feature type="sequence variant" id="VAR_032656" description="In dbSNP:rs35061979." evidence="10">
    <original>R</original>
    <variation>Q</variation>
    <location>
        <position position="278"/>
    </location>
</feature>
<feature type="sequence variant" id="VAR_032657" description="In dbSNP:rs150000287." evidence="10">
    <original>V</original>
    <variation>M</variation>
    <location>
        <position position="291"/>
    </location>
</feature>
<feature type="sequence variant" id="VAR_032658" description="In dbSNP:rs775667046." evidence="10">
    <original>L</original>
    <variation>M</variation>
    <location>
        <position position="293"/>
    </location>
</feature>
<feature type="sequence variant" id="VAR_032659" evidence="10">
    <original>E</original>
    <variation>V</variation>
    <location>
        <position position="296"/>
    </location>
</feature>
<feature type="sequence variant" id="VAR_032660" description="In dbSNP:rs751249880." evidence="10">
    <original>P</original>
    <variation>S</variation>
    <location>
        <position position="307"/>
    </location>
</feature>
<feature type="sequence variant" id="VAR_032661" description="In dbSNP:rs139998264." evidence="10">
    <original>V</original>
    <variation>M</variation>
    <location>
        <position position="308"/>
    </location>
</feature>
<feature type="sequence variant" id="VAR_032662" description="No effect on protein folding; dbSNP:rs140744493." evidence="10 14">
    <original>R</original>
    <variation>C</variation>
    <location>
        <position position="336"/>
    </location>
</feature>
<feature type="sequence variant" id="VAR_032663" description="In dbSNP:rs780121474." evidence="10">
    <original>D</original>
    <variation>E</variation>
    <location>
        <position position="338"/>
    </location>
</feature>
<feature type="sequence variant" id="VAR_032664" description="Impaired protein folding; dbSNP:rs1033145581." evidence="10 14">
    <original>W</original>
    <variation>C</variation>
    <location>
        <position position="349"/>
    </location>
</feature>
<feature type="sequence variant" id="VAR_032665" description="In dbSNP:rs755737249." evidence="10">
    <original>G</original>
    <variation>R</variation>
    <location>
        <position position="361"/>
    </location>
</feature>
<feature type="sequence variant" id="VAR_032666" description="Impaired protein folding; dbSNP:rs755737249." evidence="10 14">
    <original>G</original>
    <variation>S</variation>
    <location>
        <position position="361"/>
    </location>
</feature>
<feature type="sequence variant" id="VAR_032667" description="In dbSNP:rs779488814." evidence="10">
    <original>R</original>
    <variation>Q</variation>
    <location>
        <position position="371"/>
    </location>
</feature>
<feature type="sequence variant" id="VAR_032668" description="Impaired protein folding; dbSNP:rs146942305." evidence="10 14">
    <original>R</original>
    <variation>W</variation>
    <location>
        <position position="384"/>
    </location>
</feature>
<feature type="mutagenesis site" description="Loss of inactivation of lipoprotein lipase LPL." evidence="11">
    <original>E</original>
    <variation>A</variation>
    <location>
        <position position="40"/>
    </location>
</feature>
<feature type="mutagenesis site" description="Decreased inactivation of lipoprotein lipase LPL." evidence="11">
    <original>E</original>
    <variation>D</variation>
    <location>
        <position position="40"/>
    </location>
</feature>
<feature type="mutagenesis site" description="No effect on secretion and proteolytic cleavage. Loss of oligomerization; when associated with A-80." evidence="11">
    <original>C</original>
    <variation>A</variation>
    <location>
        <position position="76"/>
    </location>
</feature>
<feature type="mutagenesis site" description="No effect on secretion and proteolytic cleavage. Loss of oligomerization; when associated with A-76." evidence="11">
    <original>C</original>
    <variation>A</variation>
    <location>
        <position position="80"/>
    </location>
</feature>
<feature type="mutagenesis site" description="Loss of proteolytic cleavage. No effect on the ability to inactivate lipoprotein lipase LPL." evidence="11">
    <original>RRKR</original>
    <variation>GSGS</variation>
    <location>
        <begin position="161"/>
        <end position="164"/>
    </location>
</feature>
<feature type="mutagenesis site" description="Loss of proteolytic cleavage. Decreased ability to inactivate lipoprotein lipase LPL." evidence="12">
    <original>R</original>
    <variation>A</variation>
    <location>
        <position position="161"/>
    </location>
</feature>
<feature type="mutagenesis site" description="Loss of proteolytic cleavage." evidence="12">
    <original>R</original>
    <variation>A</variation>
    <location>
        <position position="164"/>
    </location>
</feature>
<feature type="mutagenesis site" description="Impaired protein folding." evidence="14">
    <original>G</original>
    <variation>R</variation>
    <location>
        <position position="223"/>
    </location>
</feature>
<feature type="sequence conflict" description="In Ref. 5; AAD41088." evidence="22" ref="5">
    <original>LREHAERTRSQLSALER</original>
    <variation>CANTGAHPQSAERAGA</variation>
    <location>
        <begin position="55"/>
        <end position="71"/>
    </location>
</feature>
<feature type="sequence conflict" description="In Ref. 4; BAB40692." evidence="22" ref="4">
    <original>E</original>
    <variation>G</variation>
    <location>
        <position position="60"/>
    </location>
</feature>
<feature type="sequence conflict" description="In Ref. 1; AAF62868." evidence="22" ref="1">
    <original>A</original>
    <variation>P</variation>
    <location>
        <position position="175"/>
    </location>
</feature>
<feature type="sequence conflict" description="In Ref. 7; BAG64351." evidence="22" ref="7">
    <original>F</original>
    <variation>S</variation>
    <location>
        <position position="237"/>
    </location>
</feature>
<feature type="sequence conflict" description="In Ref. 8; BAD96209." evidence="22" ref="8">
    <original>P</original>
    <variation>S</variation>
    <location>
        <position position="251"/>
    </location>
</feature>
<feature type="sequence conflict" description="In Ref. 7; BAG64351 and 8; BAD96209." evidence="22" ref="7 8">
    <original>N</original>
    <variation>D</variation>
    <location>
        <position position="270"/>
    </location>
</feature>
<feature type="sequence conflict" description="In Ref. 8; BAD96244." evidence="22" ref="8">
    <original>L</original>
    <variation>R</variation>
    <location>
        <position position="277"/>
    </location>
</feature>
<feature type="sequence conflict" description="In Ref. 1; AAF62868." evidence="22" ref="1">
    <original>L</original>
    <variation>F</variation>
    <location>
        <position position="304"/>
    </location>
</feature>
<feature type="sequence conflict" description="In Ref. 8; BAD96209." evidence="22" ref="8">
    <original>Y</original>
    <variation>H</variation>
    <location>
        <position position="363"/>
    </location>
</feature>
<feature type="sequence conflict" description="In Ref. 1; AAF62868." evidence="22" ref="1">
    <original>P</original>
    <variation>S</variation>
    <location>
        <position position="389"/>
    </location>
</feature>
<feature type="helix" evidence="26">
    <location>
        <begin position="188"/>
        <end position="193"/>
    </location>
</feature>
<feature type="strand" evidence="26">
    <location>
        <begin position="200"/>
        <end position="204"/>
    </location>
</feature>
<feature type="strand" evidence="26">
    <location>
        <begin position="212"/>
        <end position="219"/>
    </location>
</feature>
<feature type="strand" evidence="26">
    <location>
        <begin position="222"/>
        <end position="233"/>
    </location>
</feature>
<feature type="helix" evidence="26">
    <location>
        <begin position="241"/>
        <end position="246"/>
    </location>
</feature>
<feature type="strand" evidence="26">
    <location>
        <begin position="253"/>
        <end position="256"/>
    </location>
</feature>
<feature type="helix" evidence="26">
    <location>
        <begin position="259"/>
        <end position="266"/>
    </location>
</feature>
<feature type="strand" evidence="26">
    <location>
        <begin position="271"/>
        <end position="278"/>
    </location>
</feature>
<feature type="strand" evidence="26">
    <location>
        <begin position="284"/>
        <end position="293"/>
    </location>
</feature>
<feature type="helix" evidence="26">
    <location>
        <begin position="296"/>
        <end position="298"/>
    </location>
</feature>
<feature type="strand" evidence="26">
    <location>
        <begin position="302"/>
        <end position="304"/>
    </location>
</feature>
<feature type="helix" evidence="26">
    <location>
        <begin position="306"/>
        <end position="311"/>
    </location>
</feature>
<feature type="strand" evidence="26">
    <location>
        <begin position="322"/>
        <end position="324"/>
    </location>
</feature>
<feature type="helix" evidence="26">
    <location>
        <begin position="341"/>
        <end position="344"/>
    </location>
</feature>
<feature type="strand" evidence="26">
    <location>
        <begin position="352"/>
        <end position="358"/>
    </location>
</feature>
<feature type="helix" evidence="26">
    <location>
        <begin position="371"/>
        <end position="374"/>
    </location>
</feature>
<feature type="helix" evidence="26">
    <location>
        <begin position="381"/>
        <end position="384"/>
    </location>
</feature>
<feature type="strand" evidence="26">
    <location>
        <begin position="391"/>
        <end position="399"/>
    </location>
</feature>
<protein>
    <recommendedName>
        <fullName>Angiopoietin-related protein 4</fullName>
    </recommendedName>
    <alternativeName>
        <fullName>Angiopoietin-like protein 4</fullName>
    </alternativeName>
    <alternativeName>
        <fullName evidence="18">Hepatic fibrinogen/angiopoietin-related protein</fullName>
        <shortName evidence="18">HFARP</shortName>
    </alternativeName>
    <component>
        <recommendedName>
            <fullName>ANGPTL4 N-terminal chain</fullName>
        </recommendedName>
    </component>
    <component>
        <recommendedName>
            <fullName>ANGPTL4 C-terminal chain</fullName>
        </recommendedName>
    </component>
</protein>
<organism>
    <name type="scientific">Homo sapiens</name>
    <name type="common">Human</name>
    <dbReference type="NCBI Taxonomy" id="9606"/>
    <lineage>
        <taxon>Eukaryota</taxon>
        <taxon>Metazoa</taxon>
        <taxon>Chordata</taxon>
        <taxon>Craniata</taxon>
        <taxon>Vertebrata</taxon>
        <taxon>Euteleostomi</taxon>
        <taxon>Mammalia</taxon>
        <taxon>Eutheria</taxon>
        <taxon>Euarchontoglires</taxon>
        <taxon>Primates</taxon>
        <taxon>Haplorrhini</taxon>
        <taxon>Catarrhini</taxon>
        <taxon>Hominidae</taxon>
        <taxon>Homo</taxon>
    </lineage>
</organism>
<proteinExistence type="evidence at protein level"/>
<comment type="function">
    <text evidence="2 8 9 11 12 13 15 24">Mediates inactivation of the lipoprotein lipase LPL, and thereby plays a role in the regulation of triglyceride clearance from the blood serum and in lipid metabolism (PubMed:19270337, PubMed:21398697, PubMed:27929370, PubMed:29899144). May also play a role in regulating glucose homeostasis and insulin sensitivity (Probable). Inhibits proliferation, migration, and tubule formation of endothelial cells and reduces vascular leakage (PubMed:14583458, PubMed:17068295). Upon heterologous expression, inhibits the adhesion of endothelial cell to the extracellular matrix (ECM), and inhibits the reorganization of the actin cytoskeleton, formation of actin stress fibers and focal adhesions in endothelial cells that have adhered to ANGPTL4-containing ECM (in vitro) (PubMed:17068295). Depending on context, may modulate tumor-related angiogenesis (By similarity).</text>
</comment>
<comment type="function">
    <molecule>ANGPTL4 N-terminal chain</molecule>
    <text evidence="11 12 13 15">Mediates inactivation of the lipoprotein lipase LPL, and thereby plays an important role in the regulation of triglyceride clearance from the blood serum and in lipid metabolism (PubMed:19270337, PubMed:21398697, PubMed:27929370, PubMed:29899144). Has higher activity in LPL inactivation than the uncleaved protein (PubMed:19270337, PubMed:21398697).</text>
</comment>
<comment type="subunit">
    <text evidence="1 11 12">Homooligomer; disulfide-linked via Cys residues in the N-terminal part of the protein (PubMed:19270337). The homooligomer undergoes proteolytic processing to release the ANGPTL4 C-terminal chain, which circulates as a monomer (PubMed:19270337). The homooligomer unprocessed form is able to interact with the extracellular matrix (PubMed:21398697).</text>
</comment>
<comment type="interaction">
    <interactant intactId="EBI-2968146">
        <id>Q9BY76</id>
    </interactant>
    <interactant intactId="EBI-2968146">
        <id>Q9BY76</id>
        <label>ANGPTL4</label>
    </interactant>
    <organismsDiffer>false</organismsDiffer>
    <experiments>3</experiments>
</comment>
<comment type="interaction">
    <interactant intactId="EBI-2968146">
        <id>Q9BY76</id>
    </interactant>
    <interactant intactId="EBI-703066">
        <id>P05556</id>
        <label>ITGB1</label>
    </interactant>
    <organismsDiffer>false</organismsDiffer>
    <experiments>2</experiments>
</comment>
<comment type="interaction">
    <interactant intactId="EBI-2968146">
        <id>Q9BY76</id>
    </interactant>
    <interactant intactId="EBI-1223434">
        <id>P18084</id>
        <label>ITGB5</label>
    </interactant>
    <organismsDiffer>false</organismsDiffer>
    <experiments>3</experiments>
</comment>
<comment type="subcellular location">
    <subcellularLocation>
        <location evidence="5 8 9 11 12 16">Secreted</location>
    </subcellularLocation>
    <subcellularLocation>
        <location evidence="9 12">Secreted</location>
        <location evidence="9 12">Extracellular space</location>
        <location evidence="9 12">Extracellular matrix</location>
    </subcellularLocation>
    <text evidence="9 12 23">The unprocessed form interacts with the extracellular matrix (PubMed:17068295, PubMed:21398697). This may constitute a dynamic reservoir, a regulatory mechanism of the bioavailability of ANGPTL4 (Probable).</text>
</comment>
<comment type="alternative products">
    <event type="alternative splicing"/>
    <isoform>
        <id>Q9BY76-1</id>
        <name>1</name>
        <sequence type="displayed"/>
    </isoform>
    <isoform>
        <id>Q9BY76-2</id>
        <name>2</name>
        <sequence type="described" ref="VSP_047045"/>
    </isoform>
    <isoform>
        <id>Q9BY76-3</id>
        <name>3</name>
        <sequence type="described" ref="VSP_055092"/>
    </isoform>
</comment>
<comment type="tissue specificity">
    <text evidence="5 6 7 16">Detected in blood plasma (at protein level) (PubMed:29899519). Detected in liver (PubMed:10698685). Detected in white fat tissue and placenta (PubMed:10866690). Expressed at high levels in the placenta, heart, liver, muscle, pancreas and lung but expressed poorly in the brain and kidney.</text>
</comment>
<comment type="induction">
    <text evidence="9">Up-regulated when cells are exposed to severe hypoxia (in vitro).</text>
</comment>
<comment type="PTM">
    <text evidence="5">N-glycosylated.</text>
</comment>
<comment type="PTM">
    <molecule>ANGPTL4 N-terminal chain</molecule>
    <text evidence="11">Forms disulfide-linked dimers and tetramers.</text>
</comment>
<comment type="PTM">
    <text evidence="9 11 12">Cleaved into a smaller N-terminal chain and a larger chain that contains the fibrinogen C-terminal domain; both cleaved and uncleaved forms are detected in the extracellular space. The cleaved form is not present within the cell.</text>
</comment>
<comment type="polymorphism">
    <text evidence="10">Genetic variations in ANGPTL4 are associated with low plasma triglyceride levels and define the plasma triglyceride level quantitative trait locus (TGQTL) [MIM:615881].</text>
</comment>
<comment type="sequence caution" evidence="22">
    <conflict type="erroneous initiation">
        <sequence resource="EMBL-CDS" id="AAQ88642"/>
    </conflict>
</comment>
<dbReference type="EMBL" id="AF169312">
    <property type="protein sequence ID" value="AAF62868.1"/>
    <property type="molecule type" value="mRNA"/>
</dbReference>
<dbReference type="EMBL" id="AF202636">
    <property type="protein sequence ID" value="AAG22490.1"/>
    <property type="molecule type" value="mRNA"/>
</dbReference>
<dbReference type="EMBL" id="AB056477">
    <property type="protein sequence ID" value="BAB40692.1"/>
    <property type="molecule type" value="mRNA"/>
</dbReference>
<dbReference type="EMBL" id="AF153606">
    <property type="protein sequence ID" value="AAD41088.1"/>
    <property type="molecule type" value="mRNA"/>
</dbReference>
<dbReference type="EMBL" id="AY358275">
    <property type="protein sequence ID" value="AAQ88642.1"/>
    <property type="status" value="ALT_INIT"/>
    <property type="molecule type" value="mRNA"/>
</dbReference>
<dbReference type="EMBL" id="AK303269">
    <property type="protein sequence ID" value="BAG64351.1"/>
    <property type="molecule type" value="mRNA"/>
</dbReference>
<dbReference type="EMBL" id="AK222489">
    <property type="protein sequence ID" value="BAD96209.1"/>
    <property type="molecule type" value="mRNA"/>
</dbReference>
<dbReference type="EMBL" id="AK222524">
    <property type="protein sequence ID" value="BAD96244.1"/>
    <property type="molecule type" value="mRNA"/>
</dbReference>
<dbReference type="EMBL" id="AC136469">
    <property type="status" value="NOT_ANNOTATED_CDS"/>
    <property type="molecule type" value="Genomic_DNA"/>
</dbReference>
<dbReference type="EMBL" id="CH471139">
    <property type="protein sequence ID" value="EAW68930.1"/>
    <property type="molecule type" value="Genomic_DNA"/>
</dbReference>
<dbReference type="EMBL" id="CH471139">
    <property type="protein sequence ID" value="EAW68931.1"/>
    <property type="molecule type" value="Genomic_DNA"/>
</dbReference>
<dbReference type="EMBL" id="BC023647">
    <property type="protein sequence ID" value="AAH23647.1"/>
    <property type="molecule type" value="mRNA"/>
</dbReference>
<dbReference type="CCDS" id="CCDS12200.1">
    <molecule id="Q9BY76-1"/>
</dbReference>
<dbReference type="CCDS" id="CCDS42493.1">
    <molecule id="Q9BY76-2"/>
</dbReference>
<dbReference type="RefSeq" id="NP_001034756.1">
    <molecule id="Q9BY76-2"/>
    <property type="nucleotide sequence ID" value="NM_001039667.3"/>
</dbReference>
<dbReference type="RefSeq" id="NP_647475.1">
    <molecule id="Q9BY76-1"/>
    <property type="nucleotide sequence ID" value="NM_139314.3"/>
</dbReference>
<dbReference type="PDB" id="6EUB">
    <property type="method" value="X-ray"/>
    <property type="resolution" value="2.30 A"/>
    <property type="chains" value="A=184-406"/>
</dbReference>
<dbReference type="PDB" id="6U0A">
    <property type="method" value="X-ray"/>
    <property type="resolution" value="2.11 A"/>
    <property type="chains" value="A=185-400"/>
</dbReference>
<dbReference type="PDB" id="6U1U">
    <property type="method" value="X-ray"/>
    <property type="resolution" value="1.75 A"/>
    <property type="chains" value="A=185-400"/>
</dbReference>
<dbReference type="PDB" id="6U73">
    <property type="method" value="X-ray"/>
    <property type="resolution" value="2.38 A"/>
    <property type="chains" value="A=185-400"/>
</dbReference>
<dbReference type="PDBsum" id="6EUB"/>
<dbReference type="PDBsum" id="6U0A"/>
<dbReference type="PDBsum" id="6U1U"/>
<dbReference type="PDBsum" id="6U73"/>
<dbReference type="SASBDB" id="Q9BY76"/>
<dbReference type="SMR" id="Q9BY76"/>
<dbReference type="BioGRID" id="119316">
    <property type="interactions" value="37"/>
</dbReference>
<dbReference type="CORUM" id="Q9BY76"/>
<dbReference type="FunCoup" id="Q9BY76">
    <property type="interactions" value="277"/>
</dbReference>
<dbReference type="IntAct" id="Q9BY76">
    <property type="interactions" value="31"/>
</dbReference>
<dbReference type="MINT" id="Q9BY76"/>
<dbReference type="STRING" id="9606.ENSP00000301455"/>
<dbReference type="UniLectin" id="Q9BY76"/>
<dbReference type="GlyConnect" id="1918">
    <property type="glycosylation" value="11 N-Linked glycans (1 site)"/>
</dbReference>
<dbReference type="GlyCosmos" id="Q9BY76">
    <property type="glycosylation" value="4 sites, 16 glycans"/>
</dbReference>
<dbReference type="GlyGen" id="Q9BY76">
    <property type="glycosylation" value="4 sites, 22 N-linked glycans (1 site), 3 O-linked glycans (3 sites)"/>
</dbReference>
<dbReference type="iPTMnet" id="Q9BY76"/>
<dbReference type="PhosphoSitePlus" id="Q9BY76"/>
<dbReference type="BioMuta" id="ANGPTL4"/>
<dbReference type="DMDM" id="25008123"/>
<dbReference type="jPOST" id="Q9BY76"/>
<dbReference type="MassIVE" id="Q9BY76"/>
<dbReference type="PaxDb" id="9606-ENSP00000301455"/>
<dbReference type="PeptideAtlas" id="Q9BY76"/>
<dbReference type="ProteomicsDB" id="2383"/>
<dbReference type="ProteomicsDB" id="25349"/>
<dbReference type="ProteomicsDB" id="79597">
    <molecule id="Q9BY76-1"/>
</dbReference>
<dbReference type="ABCD" id="Q9BY76">
    <property type="antibodies" value="17 sequenced antibodies"/>
</dbReference>
<dbReference type="Antibodypedia" id="1649">
    <property type="antibodies" value="574 antibodies from 38 providers"/>
</dbReference>
<dbReference type="DNASU" id="51129"/>
<dbReference type="Ensembl" id="ENST00000301455.7">
    <molecule id="Q9BY76-1"/>
    <property type="protein sequence ID" value="ENSP00000301455.1"/>
    <property type="gene ID" value="ENSG00000167772.12"/>
</dbReference>
<dbReference type="Ensembl" id="ENST00000393962.6">
    <molecule id="Q9BY76-2"/>
    <property type="protein sequence ID" value="ENSP00000377534.1"/>
    <property type="gene ID" value="ENSG00000167772.12"/>
</dbReference>
<dbReference type="Ensembl" id="ENST00000593998.5">
    <molecule id="Q9BY76-1"/>
    <property type="protein sequence ID" value="ENSP00000472551.1"/>
    <property type="gene ID" value="ENSG00000167772.12"/>
</dbReference>
<dbReference type="GeneID" id="51129"/>
<dbReference type="KEGG" id="hsa:51129"/>
<dbReference type="MANE-Select" id="ENST00000301455.7">
    <property type="protein sequence ID" value="ENSP00000301455.1"/>
    <property type="RefSeq nucleotide sequence ID" value="NM_139314.3"/>
    <property type="RefSeq protein sequence ID" value="NP_647475.1"/>
</dbReference>
<dbReference type="UCSC" id="uc002mjq.3">
    <molecule id="Q9BY76-1"/>
    <property type="organism name" value="human"/>
</dbReference>
<dbReference type="AGR" id="HGNC:16039"/>
<dbReference type="CTD" id="51129"/>
<dbReference type="DisGeNET" id="51129"/>
<dbReference type="GeneCards" id="ANGPTL4"/>
<dbReference type="HGNC" id="HGNC:16039">
    <property type="gene designation" value="ANGPTL4"/>
</dbReference>
<dbReference type="HPA" id="ENSG00000167772">
    <property type="expression patterns" value="Tissue enhanced (adipose tissue, breast, liver)"/>
</dbReference>
<dbReference type="MalaCards" id="ANGPTL4"/>
<dbReference type="MIM" id="605910">
    <property type="type" value="gene"/>
</dbReference>
<dbReference type="MIM" id="615881">
    <property type="type" value="phenotype"/>
</dbReference>
<dbReference type="neXtProt" id="NX_Q9BY76"/>
<dbReference type="OpenTargets" id="ENSG00000167772"/>
<dbReference type="PharmGKB" id="PA24797"/>
<dbReference type="VEuPathDB" id="HostDB:ENSG00000167772"/>
<dbReference type="eggNOG" id="KOG2579">
    <property type="taxonomic scope" value="Eukaryota"/>
</dbReference>
<dbReference type="GeneTree" id="ENSGT00940000159478"/>
<dbReference type="HOGENOM" id="CLU_038628_2_1_1"/>
<dbReference type="InParanoid" id="Q9BY76"/>
<dbReference type="OMA" id="MATGFPF"/>
<dbReference type="OrthoDB" id="6145874at2759"/>
<dbReference type="PAN-GO" id="Q9BY76">
    <property type="GO annotations" value="5 GO annotations based on evolutionary models"/>
</dbReference>
<dbReference type="PhylomeDB" id="Q9BY76"/>
<dbReference type="TreeFam" id="TF329953"/>
<dbReference type="PathwayCommons" id="Q9BY76"/>
<dbReference type="Reactome" id="R-HSA-1989781">
    <property type="pathway name" value="PPARA activates gene expression"/>
</dbReference>
<dbReference type="Reactome" id="R-HSA-381340">
    <property type="pathway name" value="Transcriptional regulation of white adipocyte differentiation"/>
</dbReference>
<dbReference type="Reactome" id="R-HSA-8963889">
    <property type="pathway name" value="Assembly of active LPL and LIPC lipase complexes"/>
</dbReference>
<dbReference type="Reactome" id="R-HSA-9762292">
    <property type="pathway name" value="Regulation of CDH11 function"/>
</dbReference>
<dbReference type="Reactome" id="R-HSA-9841922">
    <property type="pathway name" value="MLL4 and MLL3 complexes regulate expression of PPARG target genes in adipogenesis and hepatic steatosis"/>
</dbReference>
<dbReference type="SignaLink" id="Q9BY76"/>
<dbReference type="BioGRID-ORCS" id="51129">
    <property type="hits" value="16 hits in 1153 CRISPR screens"/>
</dbReference>
<dbReference type="ChiTaRS" id="ANGPTL4">
    <property type="organism name" value="human"/>
</dbReference>
<dbReference type="GeneWiki" id="ANGPTL4"/>
<dbReference type="GenomeRNAi" id="51129"/>
<dbReference type="Pharos" id="Q9BY76">
    <property type="development level" value="Tbio"/>
</dbReference>
<dbReference type="PRO" id="PR:Q9BY76"/>
<dbReference type="Proteomes" id="UP000005640">
    <property type="component" value="Chromosome 19"/>
</dbReference>
<dbReference type="RNAct" id="Q9BY76">
    <property type="molecule type" value="protein"/>
</dbReference>
<dbReference type="Bgee" id="ENSG00000167772">
    <property type="expression patterns" value="Expressed in pericardium and 160 other cell types or tissues"/>
</dbReference>
<dbReference type="ExpressionAtlas" id="Q9BY76">
    <property type="expression patterns" value="baseline and differential"/>
</dbReference>
<dbReference type="GO" id="GO:0072562">
    <property type="term" value="C:blood microparticle"/>
    <property type="evidence" value="ECO:0007005"/>
    <property type="project" value="UniProtKB"/>
</dbReference>
<dbReference type="GO" id="GO:0062023">
    <property type="term" value="C:collagen-containing extracellular matrix"/>
    <property type="evidence" value="ECO:0000318"/>
    <property type="project" value="GO_Central"/>
</dbReference>
<dbReference type="GO" id="GO:0005576">
    <property type="term" value="C:extracellular region"/>
    <property type="evidence" value="ECO:0000314"/>
    <property type="project" value="UniProtKB"/>
</dbReference>
<dbReference type="GO" id="GO:0005615">
    <property type="term" value="C:extracellular space"/>
    <property type="evidence" value="ECO:0000314"/>
    <property type="project" value="MGI"/>
</dbReference>
<dbReference type="GO" id="GO:0004857">
    <property type="term" value="F:enzyme inhibitor activity"/>
    <property type="evidence" value="ECO:0000250"/>
    <property type="project" value="UniProtKB"/>
</dbReference>
<dbReference type="GO" id="GO:0042802">
    <property type="term" value="F:identical protein binding"/>
    <property type="evidence" value="ECO:0000353"/>
    <property type="project" value="IntAct"/>
</dbReference>
<dbReference type="GO" id="GO:0035473">
    <property type="term" value="F:lipase binding"/>
    <property type="evidence" value="ECO:0000353"/>
    <property type="project" value="BHF-UCL"/>
</dbReference>
<dbReference type="GO" id="GO:0055102">
    <property type="term" value="F:lipase inhibitor activity"/>
    <property type="evidence" value="ECO:0000314"/>
    <property type="project" value="BHF-UCL"/>
</dbReference>
<dbReference type="GO" id="GO:0001525">
    <property type="term" value="P:angiogenesis"/>
    <property type="evidence" value="ECO:0007669"/>
    <property type="project" value="UniProtKB-KW"/>
</dbReference>
<dbReference type="GO" id="GO:0007596">
    <property type="term" value="P:blood coagulation"/>
    <property type="evidence" value="ECO:0007669"/>
    <property type="project" value="InterPro"/>
</dbReference>
<dbReference type="GO" id="GO:0072577">
    <property type="term" value="P:endothelial cell apoptotic process"/>
    <property type="evidence" value="ECO:0007669"/>
    <property type="project" value="Ensembl"/>
</dbReference>
<dbReference type="GO" id="GO:0006629">
    <property type="term" value="P:lipid metabolic process"/>
    <property type="evidence" value="ECO:0007669"/>
    <property type="project" value="UniProtKB-KW"/>
</dbReference>
<dbReference type="GO" id="GO:0043066">
    <property type="term" value="P:negative regulation of apoptotic process"/>
    <property type="evidence" value="ECO:0000314"/>
    <property type="project" value="UniProtKB"/>
</dbReference>
<dbReference type="GO" id="GO:2000352">
    <property type="term" value="P:negative regulation of endothelial cell apoptotic process"/>
    <property type="evidence" value="ECO:0007669"/>
    <property type="project" value="Ensembl"/>
</dbReference>
<dbReference type="GO" id="GO:0045717">
    <property type="term" value="P:negative regulation of fatty acid biosynthetic process"/>
    <property type="evidence" value="ECO:0000314"/>
    <property type="project" value="ARUK-UCL"/>
</dbReference>
<dbReference type="GO" id="GO:0010903">
    <property type="term" value="P:negative regulation of very-low-density lipoprotein particle remodeling"/>
    <property type="evidence" value="ECO:0000314"/>
    <property type="project" value="BHF-UCL"/>
</dbReference>
<dbReference type="GO" id="GO:0045766">
    <property type="term" value="P:positive regulation of angiogenesis"/>
    <property type="evidence" value="ECO:0000304"/>
    <property type="project" value="UniProtKB"/>
</dbReference>
<dbReference type="GO" id="GO:0043335">
    <property type="term" value="P:protein unfolding"/>
    <property type="evidence" value="ECO:0000314"/>
    <property type="project" value="ARUK-UCL"/>
</dbReference>
<dbReference type="GO" id="GO:0090318">
    <property type="term" value="P:regulation of chylomicron remodeling"/>
    <property type="evidence" value="ECO:0000314"/>
    <property type="project" value="BHF-UCL"/>
</dbReference>
<dbReference type="GO" id="GO:0001666">
    <property type="term" value="P:response to hypoxia"/>
    <property type="evidence" value="ECO:0000303"/>
    <property type="project" value="UniProtKB"/>
</dbReference>
<dbReference type="GO" id="GO:0070328">
    <property type="term" value="P:triglyceride homeostasis"/>
    <property type="evidence" value="ECO:0000250"/>
    <property type="project" value="BHF-UCL"/>
</dbReference>
<dbReference type="CDD" id="cd00087">
    <property type="entry name" value="FReD"/>
    <property type="match status" value="1"/>
</dbReference>
<dbReference type="FunFam" id="3.90.215.10:FF:000003">
    <property type="entry name" value="angiopoietin-2 isoform X1"/>
    <property type="match status" value="1"/>
</dbReference>
<dbReference type="FunFam" id="4.10.530.10:FF:000001">
    <property type="entry name" value="angiopoietin-2 isoform X1"/>
    <property type="match status" value="1"/>
</dbReference>
<dbReference type="Gene3D" id="3.90.215.10">
    <property type="entry name" value="Gamma Fibrinogen, chain A, domain 1"/>
    <property type="match status" value="1"/>
</dbReference>
<dbReference type="Gene3D" id="4.10.530.10">
    <property type="entry name" value="Gamma-fibrinogen Carboxyl Terminal Fragment, domain 2"/>
    <property type="match status" value="1"/>
</dbReference>
<dbReference type="InterPro" id="IPR037579">
    <property type="entry name" value="FIB_ANG-like"/>
</dbReference>
<dbReference type="InterPro" id="IPR036056">
    <property type="entry name" value="Fibrinogen-like_C"/>
</dbReference>
<dbReference type="InterPro" id="IPR014716">
    <property type="entry name" value="Fibrinogen_a/b/g_C_1"/>
</dbReference>
<dbReference type="InterPro" id="IPR002181">
    <property type="entry name" value="Fibrinogen_a/b/g_C_dom"/>
</dbReference>
<dbReference type="InterPro" id="IPR020837">
    <property type="entry name" value="Fibrinogen_CS"/>
</dbReference>
<dbReference type="PANTHER" id="PTHR47221">
    <property type="entry name" value="FIBRINOGEN ALPHA CHAIN"/>
    <property type="match status" value="1"/>
</dbReference>
<dbReference type="PANTHER" id="PTHR47221:SF6">
    <property type="entry name" value="FIBRINOGEN ALPHA CHAIN"/>
    <property type="match status" value="1"/>
</dbReference>
<dbReference type="Pfam" id="PF00147">
    <property type="entry name" value="Fibrinogen_C"/>
    <property type="match status" value="1"/>
</dbReference>
<dbReference type="SMART" id="SM00186">
    <property type="entry name" value="FBG"/>
    <property type="match status" value="1"/>
</dbReference>
<dbReference type="SUPFAM" id="SSF56496">
    <property type="entry name" value="Fibrinogen C-terminal domain-like"/>
    <property type="match status" value="1"/>
</dbReference>
<dbReference type="PROSITE" id="PS00514">
    <property type="entry name" value="FIBRINOGEN_C_1"/>
    <property type="match status" value="1"/>
</dbReference>
<dbReference type="PROSITE" id="PS51406">
    <property type="entry name" value="FIBRINOGEN_C_2"/>
    <property type="match status" value="1"/>
</dbReference>
<accession>Q9BY76</accession>
<accession>A8MY84</accession>
<accession>B4E089</accession>
<accession>D6W670</accession>
<accession>F5H0I2</accession>
<accession>Q53HQ6</accession>
<accession>Q53HU1</accession>
<accession>Q6UXN0</accession>
<accession>Q9HBV4</accession>
<accession>Q9NZU4</accession>
<accession>Q9Y5B3</accession>
<gene>
    <name type="primary">ANGPTL4</name>
    <name type="synonym">ARP4</name>
    <name type="synonym">HFARP</name>
    <name evidence="19" type="synonym">PGAR</name>
    <name evidence="20" type="ORF">PP1158</name>
    <name type="ORF">PSEC0166</name>
    <name type="ORF">UNQ171/PRO197</name>
</gene>
<keyword id="KW-0002">3D-structure</keyword>
<keyword id="KW-0025">Alternative splicing</keyword>
<keyword id="KW-0037">Angiogenesis</keyword>
<keyword id="KW-0175">Coiled coil</keyword>
<keyword id="KW-0903">Direct protein sequencing</keyword>
<keyword id="KW-1015">Disulfide bond</keyword>
<keyword id="KW-0272">Extracellular matrix</keyword>
<keyword id="KW-0325">Glycoprotein</keyword>
<keyword id="KW-0443">Lipid metabolism</keyword>
<keyword id="KW-1267">Proteomics identification</keyword>
<keyword id="KW-1185">Reference proteome</keyword>
<keyword id="KW-0964">Secreted</keyword>
<keyword id="KW-0732">Signal</keyword>